<name>PPSB_ASPOR</name>
<reference key="1">
    <citation type="journal article" date="2005" name="Nature">
        <title>Genome sequencing and analysis of Aspergillus oryzae.</title>
        <authorList>
            <person name="Machida M."/>
            <person name="Asai K."/>
            <person name="Sano M."/>
            <person name="Tanaka T."/>
            <person name="Kumagai T."/>
            <person name="Terai G."/>
            <person name="Kusumoto K."/>
            <person name="Arima T."/>
            <person name="Akita O."/>
            <person name="Kashiwagi Y."/>
            <person name="Abe K."/>
            <person name="Gomi K."/>
            <person name="Horiuchi H."/>
            <person name="Kitamoto K."/>
            <person name="Kobayashi T."/>
            <person name="Takeuchi M."/>
            <person name="Denning D.W."/>
            <person name="Galagan J.E."/>
            <person name="Nierman W.C."/>
            <person name="Yu J."/>
            <person name="Archer D.B."/>
            <person name="Bennett J.W."/>
            <person name="Bhatnagar D."/>
            <person name="Cleveland T.E."/>
            <person name="Fedorova N.D."/>
            <person name="Gotoh O."/>
            <person name="Horikawa H."/>
            <person name="Hosoyama A."/>
            <person name="Ichinomiya M."/>
            <person name="Igarashi R."/>
            <person name="Iwashita K."/>
            <person name="Juvvadi P.R."/>
            <person name="Kato M."/>
            <person name="Kato Y."/>
            <person name="Kin T."/>
            <person name="Kokubun A."/>
            <person name="Maeda H."/>
            <person name="Maeyama N."/>
            <person name="Maruyama J."/>
            <person name="Nagasaki H."/>
            <person name="Nakajima T."/>
            <person name="Oda K."/>
            <person name="Okada K."/>
            <person name="Paulsen I."/>
            <person name="Sakamoto K."/>
            <person name="Sawano T."/>
            <person name="Takahashi M."/>
            <person name="Takase K."/>
            <person name="Terabayashi Y."/>
            <person name="Wortman J.R."/>
            <person name="Yamada O."/>
            <person name="Yamagata Y."/>
            <person name="Anazawa H."/>
            <person name="Hata Y."/>
            <person name="Koide Y."/>
            <person name="Komori T."/>
            <person name="Koyama Y."/>
            <person name="Minetoki T."/>
            <person name="Suharnan S."/>
            <person name="Tanaka A."/>
            <person name="Isono K."/>
            <person name="Kuhara S."/>
            <person name="Ogasawara N."/>
            <person name="Kikuchi H."/>
        </authorList>
    </citation>
    <scope>NUCLEOTIDE SEQUENCE [LARGE SCALE GENOMIC DNA]</scope>
    <source>
        <strain>ATCC 42149 / RIB 40</strain>
    </source>
</reference>
<reference key="2">
    <citation type="journal article" date="2021" name="ChemBioChem">
        <title>Discovery of the 2,4'-dihydroxy-3'-methoxypropiophenone biosynthesis genes in Aspergillus oryzae.</title>
        <authorList>
            <person name="Kan E."/>
            <person name="Tomita H."/>
            <person name="Katsuyama Y."/>
            <person name="Maruyama J.I."/>
            <person name="Koyama Y."/>
            <person name="Ohnishi Y."/>
        </authorList>
    </citation>
    <scope>FUNCTION</scope>
    <scope>DISRUPTION PHENOTYPE</scope>
    <scope>PATHWAY</scope>
</reference>
<protein>
    <recommendedName>
        <fullName evidence="7">Reducing polyketide synthase ppsB</fullName>
        <ecNumber evidence="9">2.3.1.-</ecNumber>
    </recommendedName>
    <alternativeName>
        <fullName evidence="7">2,4'-dihydroxy-3'-methoxypropiophenone biosynthesis cluster protein B</fullName>
    </alternativeName>
</protein>
<gene>
    <name evidence="7" type="primary">ppsB</name>
    <name type="ORF">AO090102000166</name>
</gene>
<sequence>MKVDERVAIIGTGCRFPGGSNSPHELWELLVNPRDVARKVPPDRFNIAAFHHPQMGHHGTTAAWESYFLDENIQRFDASFFNISPTEAAAMDPQQRLLLETVYESLDRAGLRLEELQGTQTGVFCGLMRHDYHRLLTADMETNPPYALAGTAGSVLANRVSYFFDWHGPSITIDTACSSSLVAVHLACESLRKGECSLAIVGGSNLLLSPDPYIWESKMQLLSPTNRCHMWDASADGFACGEGVASVVLKRLTDALADGDHIECVIRATGVNSDGRSPGLTMPNSNAQSALIMDTYARAGLHPKQNPHDRCQFFEAHGTGTKAGDPQEAAAIQDALFGCNMEENQPNNETVYVGSIKTIIGHTAGAAGLAGVIRASLALQNGVVPPNLHFNRVSDTVAPHTTHLEVPTRAVRWPELPSGVPRRVSVNSFGFGGTNAHAILESFDQASRHPSTQVERVHQSQQALLPIVFSAASQSSLADLLEGYVQWLFDNPNVDLLGLASSLLLRRSTLRYRKAFIAASPDELRIKIQHELKRNTTDAQWAIMSPPKREGGNCILGVFTGQGAQWPQMGLELIQNCPQARMRLRELQQSLDDLPIEYRPGFTLLDELSAPESQSRLGETALSLPLRTALQIIQIDLLRALGITFNAVVGHSSGEIAAVYAAGILNATDAIRVAYLRGFAVKHAASRGKMIAVNLTEHQANAICSQPMWKGQVAVAAYNSPSNVTLSGDPETMDELVWLLRSLERHTHPLNTDAAYHSHHMQPCAGPYLQALKSCNVGVSSPSSVQMFSSVYKGLVVNSTDCALDSTYWCDNMLRPVLFSQAISTCLDQIPDINLIIEVGPHTALQGSIKHILHDTLSEGSVVPYIGLAHRGEDSIQSMAAAIGRLWAYLGMRDLKLQQYIQLFGPFRESCCVQSLPTYPFDHRTSYWAEPRLSQARLHCPIPPHPLLGVLSSECGRDEWRWRNYLHLEEIPWLTGHRILSDISYPPMGYIAMAVEAAQAASRSKPLQLVEIHSLIIERTISIPVEGPGIETLFKMDIESADNDTMTGTFQCQISCGNEFQKCASGRVILALGEANPTVLPSKSKGMSISYPMNVDKFYNQLQIVGGNVSDIFRGITELTRQEGGMQGVANVPSHDQPTFHPVVMTTALQVLWGAMMSDEGRLSALPLPVRIDSVTINPSCSHSGHVCLEASITRTGSGRNGCGDVLVFNGQGDGIAQLEGIHLTLSKPKNSSDDQALAFGTTVWGPLNPDPSIGYPKNLPYNLSIQNLQARLAVLYLRDAQAGLTAQDRERLVSHRRHYVAWMDSTLSKIRDGVHPHYPRDWLLGTIGELDSQTTSHETLIHVTHIVGQNLLQFLSGGEETILLKLRDNNIDLLTRYYQDDEAMRIMSDSLGKVVSQIVFRNPQLHVLEVGAGTGSATRAILSSIGRNYHSYTYTDISPAFFEGASAAFHTHEDRFIYKVLDVECDVTDQGFSMHSYDVVIASNVLHATRSLRRTLMNIRKLIKPSGYLVLLEGTDPDRVPTPFIFGAFEGWWLGEDDGRSGGPLIRREEWDVLLQCTGFGRCTSYTPTNQANLYGMSVIVSQPTDMPAIPVIEMDLLLVGGSTETTRQIILDLKTILRDSFVQISSCLSVDDFTPGPGISQLAILCLAELDHHSEETRWQWQDMRLMMTAASCLLWVSPADDPHSGVSKGLLRSLALDSSSGLLQHLTVIDSTPIGAEMLATTLMNLVRTKQEGMGRPEIELGWGEGILNIPRIVRDPTITQRLLASRSPCVFNLVDVREQAVCRLVSTEGSQKEKVDVYLTDPKNATTSAAKLFSNESIVQYQVHYCTQAALTITEKCSLFLIVGQNVFNGARQLALSISHGSIISTPLSWAWDVPASVSTDNEPKLLAAVAATILAFAIADLAGPSSTLWVHEAQAMGPTFMDALVSAVSDRQDIKNLTLTTSQCGLSDTRVHFVHPHSSTKTLSSVLPRNVSSAVLFDDGRLSRRSRLVLPRCANFRSFSDFFRPSSIIEEIDIQSVATILNSACAFVTRKGYEKGSSPRIISPREQSSVDSLEVVNWRQPTWIEAQILPASSLVSLSPTMAYVVVNMNHKLRRLVLDFLVRQGARHIVWVGEWSDEDFAWIAQLSRDEVHVAVVQMWAFLSSISDLYDQLTSTRKAEIPISSLQTYMPIGGIIYDGLKDSPQQAAENTLLLDELCGNDATFFILVGSLLGHIGFTDSNSFIGSTTGVLSGVISRRRQRGYVGSVLYLGEQNAVEDITLSAGDIREAFSEAILLGPPESTSNGEILAGLRNSEKWELVPKLSAWNESKTLLESDDKSQSAGQGQAHDTDAVTQLKLATSVAEAREIILQLFKEKLRRKLGLSSDVPLRRETLLHELGIDSLVAVDIHIWFARELGAKIPVVQIMGAGSIGSMVDEVVKRRNGFT</sequence>
<dbReference type="EC" id="2.3.1.-" evidence="9"/>
<dbReference type="EMBL" id="BA000052">
    <property type="protein sequence ID" value="BAE61265.1"/>
    <property type="molecule type" value="Genomic_DNA"/>
</dbReference>
<dbReference type="SMR" id="Q2UB00"/>
<dbReference type="STRING" id="510516.Q2UB00"/>
<dbReference type="EnsemblFungi" id="BAE61265">
    <property type="protein sequence ID" value="BAE61265"/>
    <property type="gene ID" value="AO090102000166"/>
</dbReference>
<dbReference type="HOGENOM" id="CLU_000022_31_0_1"/>
<dbReference type="OMA" id="RDYHSYT"/>
<dbReference type="Proteomes" id="UP000006564">
    <property type="component" value="Chromosome 4"/>
</dbReference>
<dbReference type="GO" id="GO:0004315">
    <property type="term" value="F:3-oxoacyl-[acyl-carrier-protein] synthase activity"/>
    <property type="evidence" value="ECO:0007669"/>
    <property type="project" value="InterPro"/>
</dbReference>
<dbReference type="GO" id="GO:0004312">
    <property type="term" value="F:fatty acid synthase activity"/>
    <property type="evidence" value="ECO:0007669"/>
    <property type="project" value="TreeGrafter"/>
</dbReference>
<dbReference type="GO" id="GO:0031177">
    <property type="term" value="F:phosphopantetheine binding"/>
    <property type="evidence" value="ECO:0007669"/>
    <property type="project" value="InterPro"/>
</dbReference>
<dbReference type="GO" id="GO:0006633">
    <property type="term" value="P:fatty acid biosynthetic process"/>
    <property type="evidence" value="ECO:0007669"/>
    <property type="project" value="InterPro"/>
</dbReference>
<dbReference type="GO" id="GO:0044550">
    <property type="term" value="P:secondary metabolite biosynthetic process"/>
    <property type="evidence" value="ECO:0007669"/>
    <property type="project" value="TreeGrafter"/>
</dbReference>
<dbReference type="CDD" id="cd02440">
    <property type="entry name" value="AdoMet_MTases"/>
    <property type="match status" value="1"/>
</dbReference>
<dbReference type="CDD" id="cd00833">
    <property type="entry name" value="PKS"/>
    <property type="match status" value="1"/>
</dbReference>
<dbReference type="FunFam" id="3.40.47.10:FF:000019">
    <property type="entry name" value="Polyketide synthase type I"/>
    <property type="match status" value="1"/>
</dbReference>
<dbReference type="Gene3D" id="3.40.47.10">
    <property type="match status" value="1"/>
</dbReference>
<dbReference type="Gene3D" id="1.10.1200.10">
    <property type="entry name" value="ACP-like"/>
    <property type="match status" value="1"/>
</dbReference>
<dbReference type="Gene3D" id="3.40.366.10">
    <property type="entry name" value="Malonyl-Coenzyme A Acyl Carrier Protein, domain 2"/>
    <property type="match status" value="1"/>
</dbReference>
<dbReference type="Gene3D" id="3.10.129.110">
    <property type="entry name" value="Polyketide synthase dehydratase"/>
    <property type="match status" value="1"/>
</dbReference>
<dbReference type="Gene3D" id="3.40.50.150">
    <property type="entry name" value="Vaccinia Virus protein VP39"/>
    <property type="match status" value="1"/>
</dbReference>
<dbReference type="InterPro" id="IPR001227">
    <property type="entry name" value="Ac_transferase_dom_sf"/>
</dbReference>
<dbReference type="InterPro" id="IPR036736">
    <property type="entry name" value="ACP-like_sf"/>
</dbReference>
<dbReference type="InterPro" id="IPR014043">
    <property type="entry name" value="Acyl_transferase_dom"/>
</dbReference>
<dbReference type="InterPro" id="IPR016035">
    <property type="entry name" value="Acyl_Trfase/lysoPLipase"/>
</dbReference>
<dbReference type="InterPro" id="IPR018201">
    <property type="entry name" value="Ketoacyl_synth_AS"/>
</dbReference>
<dbReference type="InterPro" id="IPR014031">
    <property type="entry name" value="Ketoacyl_synth_C"/>
</dbReference>
<dbReference type="InterPro" id="IPR014030">
    <property type="entry name" value="Ketoacyl_synth_N"/>
</dbReference>
<dbReference type="InterPro" id="IPR016036">
    <property type="entry name" value="Malonyl_transacylase_ACP-bd"/>
</dbReference>
<dbReference type="InterPro" id="IPR013217">
    <property type="entry name" value="Methyltransf_12"/>
</dbReference>
<dbReference type="InterPro" id="IPR032821">
    <property type="entry name" value="PKS_assoc"/>
</dbReference>
<dbReference type="InterPro" id="IPR020841">
    <property type="entry name" value="PKS_Beta-ketoAc_synthase_dom"/>
</dbReference>
<dbReference type="InterPro" id="IPR042104">
    <property type="entry name" value="PKS_dehydratase_sf"/>
</dbReference>
<dbReference type="InterPro" id="IPR020807">
    <property type="entry name" value="PKS_DH"/>
</dbReference>
<dbReference type="InterPro" id="IPR049551">
    <property type="entry name" value="PKS_DH_C"/>
</dbReference>
<dbReference type="InterPro" id="IPR049552">
    <property type="entry name" value="PKS_DH_N"/>
</dbReference>
<dbReference type="InterPro" id="IPR049900">
    <property type="entry name" value="PKS_mFAS_DH"/>
</dbReference>
<dbReference type="InterPro" id="IPR050091">
    <property type="entry name" value="PKS_NRPS_Biosynth_Enz"/>
</dbReference>
<dbReference type="InterPro" id="IPR020806">
    <property type="entry name" value="PKS_PP-bd"/>
</dbReference>
<dbReference type="InterPro" id="IPR009081">
    <property type="entry name" value="PP-bd_ACP"/>
</dbReference>
<dbReference type="InterPro" id="IPR029063">
    <property type="entry name" value="SAM-dependent_MTases_sf"/>
</dbReference>
<dbReference type="InterPro" id="IPR016039">
    <property type="entry name" value="Thiolase-like"/>
</dbReference>
<dbReference type="PANTHER" id="PTHR43775">
    <property type="entry name" value="FATTY ACID SYNTHASE"/>
    <property type="match status" value="1"/>
</dbReference>
<dbReference type="PANTHER" id="PTHR43775:SF48">
    <property type="entry name" value="HIGHLY REDUCING POLYKETIDE SYNTHASE SDGA"/>
    <property type="match status" value="1"/>
</dbReference>
<dbReference type="Pfam" id="PF00698">
    <property type="entry name" value="Acyl_transf_1"/>
    <property type="match status" value="1"/>
</dbReference>
<dbReference type="Pfam" id="PF16197">
    <property type="entry name" value="KAsynt_C_assoc"/>
    <property type="match status" value="1"/>
</dbReference>
<dbReference type="Pfam" id="PF00109">
    <property type="entry name" value="ketoacyl-synt"/>
    <property type="match status" value="1"/>
</dbReference>
<dbReference type="Pfam" id="PF02801">
    <property type="entry name" value="Ketoacyl-synt_C"/>
    <property type="match status" value="1"/>
</dbReference>
<dbReference type="Pfam" id="PF08242">
    <property type="entry name" value="Methyltransf_12"/>
    <property type="match status" value="1"/>
</dbReference>
<dbReference type="Pfam" id="PF21089">
    <property type="entry name" value="PKS_DH_N"/>
    <property type="match status" value="1"/>
</dbReference>
<dbReference type="Pfam" id="PF00550">
    <property type="entry name" value="PP-binding"/>
    <property type="match status" value="1"/>
</dbReference>
<dbReference type="Pfam" id="PF14765">
    <property type="entry name" value="PS-DH"/>
    <property type="match status" value="1"/>
</dbReference>
<dbReference type="SMART" id="SM00827">
    <property type="entry name" value="PKS_AT"/>
    <property type="match status" value="1"/>
</dbReference>
<dbReference type="SMART" id="SM00826">
    <property type="entry name" value="PKS_DH"/>
    <property type="match status" value="1"/>
</dbReference>
<dbReference type="SMART" id="SM00825">
    <property type="entry name" value="PKS_KS"/>
    <property type="match status" value="1"/>
</dbReference>
<dbReference type="SMART" id="SM00823">
    <property type="entry name" value="PKS_PP"/>
    <property type="match status" value="1"/>
</dbReference>
<dbReference type="SUPFAM" id="SSF47336">
    <property type="entry name" value="ACP-like"/>
    <property type="match status" value="1"/>
</dbReference>
<dbReference type="SUPFAM" id="SSF52151">
    <property type="entry name" value="FabD/lysophospholipase-like"/>
    <property type="match status" value="1"/>
</dbReference>
<dbReference type="SUPFAM" id="SSF55048">
    <property type="entry name" value="Probable ACP-binding domain of malonyl-CoA ACP transacylase"/>
    <property type="match status" value="1"/>
</dbReference>
<dbReference type="SUPFAM" id="SSF53335">
    <property type="entry name" value="S-adenosyl-L-methionine-dependent methyltransferases"/>
    <property type="match status" value="1"/>
</dbReference>
<dbReference type="SUPFAM" id="SSF53901">
    <property type="entry name" value="Thiolase-like"/>
    <property type="match status" value="1"/>
</dbReference>
<dbReference type="PROSITE" id="PS50075">
    <property type="entry name" value="CARRIER"/>
    <property type="match status" value="1"/>
</dbReference>
<dbReference type="PROSITE" id="PS00606">
    <property type="entry name" value="KS3_1"/>
    <property type="match status" value="1"/>
</dbReference>
<dbReference type="PROSITE" id="PS52004">
    <property type="entry name" value="KS3_2"/>
    <property type="match status" value="1"/>
</dbReference>
<dbReference type="PROSITE" id="PS52019">
    <property type="entry name" value="PKS_MFAS_DH"/>
    <property type="match status" value="1"/>
</dbReference>
<evidence type="ECO:0000255" key="1"/>
<evidence type="ECO:0000255" key="2">
    <source>
        <dbReference type="PROSITE-ProRule" id="PRU00258"/>
    </source>
</evidence>
<evidence type="ECO:0000255" key="3">
    <source>
        <dbReference type="PROSITE-ProRule" id="PRU01348"/>
    </source>
</evidence>
<evidence type="ECO:0000255" key="4">
    <source>
        <dbReference type="PROSITE-ProRule" id="PRU01363"/>
    </source>
</evidence>
<evidence type="ECO:0000255" key="5">
    <source>
        <dbReference type="PROSITE-ProRule" id="PRU10022"/>
    </source>
</evidence>
<evidence type="ECO:0000269" key="6">
    <source>
    </source>
</evidence>
<evidence type="ECO:0000303" key="7">
    <source>
    </source>
</evidence>
<evidence type="ECO:0000305" key="8"/>
<evidence type="ECO:0000305" key="9">
    <source>
    </source>
</evidence>
<feature type="chain" id="PRO_0000451834" description="Reducing polyketide synthase ppsB">
    <location>
        <begin position="1"/>
        <end position="2429"/>
    </location>
</feature>
<feature type="domain" description="Ketosynthase family 3 (KS3)" evidence="3">
    <location>
        <begin position="4"/>
        <end position="442"/>
    </location>
</feature>
<feature type="domain" description="PKS/mFAS DH" evidence="4">
    <location>
        <begin position="945"/>
        <end position="1233"/>
    </location>
</feature>
<feature type="domain" description="Carrier" evidence="2">
    <location>
        <begin position="2350"/>
        <end position="2425"/>
    </location>
</feature>
<feature type="region of interest" description="Malonyl-CoA:ACP transacylase (MAT) domain" evidence="1">
    <location>
        <begin position="558"/>
        <end position="873"/>
    </location>
</feature>
<feature type="region of interest" description="Product template (PT) domain" evidence="1">
    <location>
        <begin position="945"/>
        <end position="1227"/>
    </location>
</feature>
<feature type="region of interest" description="N-terminal hotdog fold" evidence="4">
    <location>
        <begin position="945"/>
        <end position="1075"/>
    </location>
</feature>
<feature type="region of interest" description="C-terminal hotdog fold" evidence="4">
    <location>
        <begin position="1090"/>
        <end position="1233"/>
    </location>
</feature>
<feature type="region of interest" description="Methyltransferase (CMeT) domain" evidence="1">
    <location>
        <begin position="1409"/>
        <end position="2158"/>
    </location>
</feature>
<feature type="active site" description="For beta-ketoacyl synthase activity" evidence="3">
    <location>
        <position position="177"/>
    </location>
</feature>
<feature type="active site" description="For beta-ketoacyl synthase activity" evidence="3">
    <location>
        <position position="317"/>
    </location>
</feature>
<feature type="active site" description="For beta-ketoacyl synthase activity" evidence="3">
    <location>
        <position position="362"/>
    </location>
</feature>
<feature type="active site" description="For acyl/malonyl transferase activity" evidence="5">
    <location>
        <position position="652"/>
    </location>
</feature>
<feature type="modified residue" description="O-(pantetheine 4'-phosphoryl)serine" evidence="2">
    <location>
        <position position="2385"/>
    </location>
</feature>
<organism>
    <name type="scientific">Aspergillus oryzae (strain ATCC 42149 / RIB 40)</name>
    <name type="common">Yellow koji mold</name>
    <dbReference type="NCBI Taxonomy" id="510516"/>
    <lineage>
        <taxon>Eukaryota</taxon>
        <taxon>Fungi</taxon>
        <taxon>Dikarya</taxon>
        <taxon>Ascomycota</taxon>
        <taxon>Pezizomycotina</taxon>
        <taxon>Eurotiomycetes</taxon>
        <taxon>Eurotiomycetidae</taxon>
        <taxon>Eurotiales</taxon>
        <taxon>Aspergillaceae</taxon>
        <taxon>Aspergillus</taxon>
        <taxon>Aspergillus subgen. Circumdati</taxon>
    </lineage>
</organism>
<keyword id="KW-0511">Multifunctional enzyme</keyword>
<keyword id="KW-0596">Phosphopantetheine</keyword>
<keyword id="KW-0597">Phosphoprotein</keyword>
<keyword id="KW-1185">Reference proteome</keyword>
<keyword id="KW-0808">Transferase</keyword>
<accession>Q2UB00</accession>
<proteinExistence type="inferred from homology"/>
<comment type="function">
    <text evidence="6 9">Reducing polyketide synthase; part of the gene cluster that mediates the biosynthesis of 2,4'-dihydroxy-3'-methoxypropiophenone (PubMed:32885554). The first step of the pathway is the conversion of acetate into acetyl-CoA by the acyl-CoA ligase ppsA (PubMed:32885554). Acetyl-CoA is then used as a starter unit by the polyketide synthase ppsB and condensed with 4 malonyl-CoA unit to produce the pentaketide backbone (PubMed:32885554). During polyketide extension, the polykedite chain is probably reduced and dehydrated by the KR and PT domains, respectively (Probable). O-methylation seems to be catalyzed by an unknown methyltransferase rather than by the CMeT domain of ppsB (Probable). Two hydroxylations and one further decarboxylation step catalyzed by yet unknown enzymes are then required to yield 4'-hydroxy-3'-methoxypropiophenone (Probable). PpsC functions as a carrier protein to transport 4'-hydroxy-3'-methoxypropiophenone to a specific cell compartment in which 4'-hydroxy-3'-methoxypropiophenone is hydroxylated to 2,4'-dihydroxy-3'-methoxypropiophenone by a still to be identified enzyme (PubMed:32885554).</text>
</comment>
<comment type="pathway">
    <text evidence="6">Secondary metabolite biosynthesis.</text>
</comment>
<comment type="domain">
    <text evidence="8">Multidomain protein; including a starter unit:ACP transacylase (SAT) that selects the starter unit; a ketosynthase (KS) that catalyzes repeated decarboxylative condensation to elongate the polyketide backbone; a malonyl-CoA:ACP transacylase (MAT) that selects and transfers the extender unit malonyl-CoA; a product template (PT) domain that controls the immediate cyclization regioselectivity of the reactive polyketide backbone; and an acyl-carrier protein (ACP) that serves as the tether of the growing and completed polyketide via its phosphopantetheinyl arm.</text>
</comment>
<comment type="disruption phenotype">
    <text evidence="6">Abolishes the production of 2,4'-dihydroxy-3'-methoxypropiophenone and 4'-hydroxy-3'-methoxypropiophenone.</text>
</comment>